<keyword id="KW-0002">3D-structure</keyword>
<keyword id="KW-0963">Cytoplasm</keyword>
<keyword id="KW-0255">Endonuclease</keyword>
<keyword id="KW-0378">Hydrolase</keyword>
<keyword id="KW-0479">Metal-binding</keyword>
<keyword id="KW-0540">Nuclease</keyword>
<keyword id="KW-1185">Reference proteome</keyword>
<keyword id="KW-0690">Ribosome biogenesis</keyword>
<keyword id="KW-0698">rRNA processing</keyword>
<keyword id="KW-0862">Zinc</keyword>
<name>YBEY_THEMA</name>
<proteinExistence type="evidence at protein level"/>
<gene>
    <name evidence="1" type="primary">ybeY</name>
    <name type="ordered locus">TM_1509</name>
</gene>
<protein>
    <recommendedName>
        <fullName evidence="1">Endoribonuclease YbeY</fullName>
        <ecNumber evidence="1">3.1.-.-</ecNumber>
    </recommendedName>
</protein>
<evidence type="ECO:0000255" key="1">
    <source>
        <dbReference type="HAMAP-Rule" id="MF_00009"/>
    </source>
</evidence>
<evidence type="ECO:0000269" key="2">
    <source>
    </source>
</evidence>
<evidence type="ECO:0007829" key="3">
    <source>
        <dbReference type="PDB" id="1TVI"/>
    </source>
</evidence>
<comment type="function">
    <text evidence="1">Single strand-specific metallo-endoribonuclease involved in late-stage 70S ribosome quality control and in maturation of the 3' terminus of the 16S rRNA.</text>
</comment>
<comment type="cofactor">
    <cofactor evidence="1 2">
        <name>Zn(2+)</name>
        <dbReference type="ChEBI" id="CHEBI:29105"/>
    </cofactor>
    <text evidence="1 2">Binds 1 zinc ion.</text>
</comment>
<comment type="subcellular location">
    <subcellularLocation>
        <location evidence="1">Cytoplasm</location>
    </subcellularLocation>
</comment>
<comment type="similarity">
    <text evidence="1">Belongs to the endoribonuclease YbeY family.</text>
</comment>
<feature type="chain" id="PRO_0000102553" description="Endoribonuclease YbeY">
    <location>
        <begin position="1"/>
        <end position="150"/>
    </location>
</feature>
<feature type="binding site" evidence="1">
    <location>
        <position position="102"/>
    </location>
    <ligand>
        <name>Zn(2+)</name>
        <dbReference type="ChEBI" id="CHEBI:29105"/>
        <note>catalytic</note>
    </ligand>
</feature>
<feature type="binding site" evidence="1">
    <location>
        <position position="106"/>
    </location>
    <ligand>
        <name>Zn(2+)</name>
        <dbReference type="ChEBI" id="CHEBI:29105"/>
        <note>catalytic</note>
    </ligand>
</feature>
<feature type="binding site" evidence="1">
    <location>
        <position position="112"/>
    </location>
    <ligand>
        <name>Zn(2+)</name>
        <dbReference type="ChEBI" id="CHEBI:29105"/>
        <note>catalytic</note>
    </ligand>
</feature>
<feature type="strand" evidence="3">
    <location>
        <begin position="3"/>
        <end position="6"/>
    </location>
</feature>
<feature type="helix" evidence="3">
    <location>
        <begin position="11"/>
        <end position="16"/>
    </location>
</feature>
<feature type="helix" evidence="3">
    <location>
        <begin position="18"/>
        <end position="28"/>
    </location>
</feature>
<feature type="strand" evidence="3">
    <location>
        <begin position="35"/>
        <end position="38"/>
    </location>
</feature>
<feature type="helix" evidence="3">
    <location>
        <begin position="41"/>
        <end position="49"/>
    </location>
</feature>
<feature type="strand" evidence="3">
    <location>
        <begin position="59"/>
        <end position="61"/>
    </location>
</feature>
<feature type="strand" evidence="3">
    <location>
        <begin position="67"/>
        <end position="69"/>
    </location>
</feature>
<feature type="strand" evidence="3">
    <location>
        <begin position="72"/>
        <end position="76"/>
    </location>
</feature>
<feature type="helix" evidence="3">
    <location>
        <begin position="78"/>
        <end position="87"/>
    </location>
</feature>
<feature type="helix" evidence="3">
    <location>
        <begin position="92"/>
        <end position="108"/>
    </location>
</feature>
<feature type="helix" evidence="3">
    <location>
        <begin position="120"/>
        <end position="137"/>
    </location>
</feature>
<reference key="1">
    <citation type="journal article" date="1999" name="Nature">
        <title>Evidence for lateral gene transfer between Archaea and Bacteria from genome sequence of Thermotoga maritima.</title>
        <authorList>
            <person name="Nelson K.E."/>
            <person name="Clayton R.A."/>
            <person name="Gill S.R."/>
            <person name="Gwinn M.L."/>
            <person name="Dodson R.J."/>
            <person name="Haft D.H."/>
            <person name="Hickey E.K."/>
            <person name="Peterson J.D."/>
            <person name="Nelson W.C."/>
            <person name="Ketchum K.A."/>
            <person name="McDonald L.A."/>
            <person name="Utterback T.R."/>
            <person name="Malek J.A."/>
            <person name="Linher K.D."/>
            <person name="Garrett M.M."/>
            <person name="Stewart A.M."/>
            <person name="Cotton M.D."/>
            <person name="Pratt M.S."/>
            <person name="Phillips C.A."/>
            <person name="Richardson D.L."/>
            <person name="Heidelberg J.F."/>
            <person name="Sutton G.G."/>
            <person name="Fleischmann R.D."/>
            <person name="Eisen J.A."/>
            <person name="White O."/>
            <person name="Salzberg S.L."/>
            <person name="Smith H.O."/>
            <person name="Venter J.C."/>
            <person name="Fraser C.M."/>
        </authorList>
    </citation>
    <scope>NUCLEOTIDE SEQUENCE [LARGE SCALE GENOMIC DNA]</scope>
    <source>
        <strain>ATCC 43589 / DSM 3109 / JCM 10099 / NBRC 100826 / MSB8</strain>
    </source>
</reference>
<reference key="2">
    <citation type="journal article" date="2005" name="J. Struct. Funct. Genomics">
        <title>NMR solution structure of Thermotoga maritima protein TM1509 reveals a Zn-metalloprotease-like tertiary structure.</title>
        <authorList>
            <person name="Penhoat C.H."/>
            <person name="Li Z."/>
            <person name="Atreya H.S."/>
            <person name="Kim S."/>
            <person name="Yee A."/>
            <person name="Xiao R."/>
            <person name="Murray D."/>
            <person name="Arrowsmith C.H."/>
            <person name="Szyperski T."/>
        </authorList>
    </citation>
    <scope>STRUCTURE BY NMR</scope>
    <scope>COFACTOR</scope>
    <scope>ZINC BINDING</scope>
</reference>
<dbReference type="EC" id="3.1.-.-" evidence="1"/>
<dbReference type="EMBL" id="AE000512">
    <property type="protein sequence ID" value="AAD36576.1"/>
    <property type="molecule type" value="Genomic_DNA"/>
</dbReference>
<dbReference type="PIR" id="F72244">
    <property type="entry name" value="F72244"/>
</dbReference>
<dbReference type="RefSeq" id="NP_229309.1">
    <property type="nucleotide sequence ID" value="NC_000853.1"/>
</dbReference>
<dbReference type="RefSeq" id="WP_004081854.1">
    <property type="nucleotide sequence ID" value="NC_000853.1"/>
</dbReference>
<dbReference type="PDB" id="1TVI">
    <property type="method" value="NMR"/>
    <property type="chains" value="A=1-150"/>
</dbReference>
<dbReference type="PDBsum" id="1TVI"/>
<dbReference type="BMRB" id="Q9X1J7"/>
<dbReference type="SMR" id="Q9X1J7"/>
<dbReference type="FunCoup" id="Q9X1J7">
    <property type="interactions" value="310"/>
</dbReference>
<dbReference type="STRING" id="243274.TM_1509"/>
<dbReference type="PaxDb" id="243274-THEMA_06755"/>
<dbReference type="EnsemblBacteria" id="AAD36576">
    <property type="protein sequence ID" value="AAD36576"/>
    <property type="gene ID" value="TM_1509"/>
</dbReference>
<dbReference type="KEGG" id="tma:TM1509"/>
<dbReference type="KEGG" id="tmi:THEMA_06755"/>
<dbReference type="KEGG" id="tmm:Tmari_1517"/>
<dbReference type="KEGG" id="tmw:THMA_1541"/>
<dbReference type="eggNOG" id="COG0319">
    <property type="taxonomic scope" value="Bacteria"/>
</dbReference>
<dbReference type="InParanoid" id="Q9X1J7"/>
<dbReference type="OrthoDB" id="9807740at2"/>
<dbReference type="EvolutionaryTrace" id="Q9X1J7"/>
<dbReference type="Proteomes" id="UP000008183">
    <property type="component" value="Chromosome"/>
</dbReference>
<dbReference type="GO" id="GO:0005737">
    <property type="term" value="C:cytoplasm"/>
    <property type="evidence" value="ECO:0007669"/>
    <property type="project" value="UniProtKB-SubCell"/>
</dbReference>
<dbReference type="GO" id="GO:0004222">
    <property type="term" value="F:metalloendopeptidase activity"/>
    <property type="evidence" value="ECO:0007669"/>
    <property type="project" value="InterPro"/>
</dbReference>
<dbReference type="GO" id="GO:0004521">
    <property type="term" value="F:RNA endonuclease activity"/>
    <property type="evidence" value="ECO:0007669"/>
    <property type="project" value="UniProtKB-UniRule"/>
</dbReference>
<dbReference type="GO" id="GO:0008270">
    <property type="term" value="F:zinc ion binding"/>
    <property type="evidence" value="ECO:0007669"/>
    <property type="project" value="UniProtKB-UniRule"/>
</dbReference>
<dbReference type="GO" id="GO:0006364">
    <property type="term" value="P:rRNA processing"/>
    <property type="evidence" value="ECO:0007669"/>
    <property type="project" value="UniProtKB-UniRule"/>
</dbReference>
<dbReference type="Gene3D" id="3.40.390.30">
    <property type="entry name" value="Metalloproteases ('zincins'), catalytic domain"/>
    <property type="match status" value="1"/>
</dbReference>
<dbReference type="HAMAP" id="MF_00009">
    <property type="entry name" value="Endoribonucl_YbeY"/>
    <property type="match status" value="1"/>
</dbReference>
<dbReference type="InterPro" id="IPR023091">
    <property type="entry name" value="MetalPrtase_cat_dom_sf_prd"/>
</dbReference>
<dbReference type="InterPro" id="IPR002036">
    <property type="entry name" value="YbeY"/>
</dbReference>
<dbReference type="InterPro" id="IPR020549">
    <property type="entry name" value="YbeY_CS"/>
</dbReference>
<dbReference type="NCBIfam" id="TIGR00043">
    <property type="entry name" value="rRNA maturation RNase YbeY"/>
    <property type="match status" value="1"/>
</dbReference>
<dbReference type="PANTHER" id="PTHR46986">
    <property type="entry name" value="ENDORIBONUCLEASE YBEY, CHLOROPLASTIC"/>
    <property type="match status" value="1"/>
</dbReference>
<dbReference type="PANTHER" id="PTHR46986:SF1">
    <property type="entry name" value="ENDORIBONUCLEASE YBEY, CHLOROPLASTIC"/>
    <property type="match status" value="1"/>
</dbReference>
<dbReference type="Pfam" id="PF02130">
    <property type="entry name" value="YbeY"/>
    <property type="match status" value="1"/>
</dbReference>
<dbReference type="SUPFAM" id="SSF55486">
    <property type="entry name" value="Metalloproteases ('zincins'), catalytic domain"/>
    <property type="match status" value="1"/>
</dbReference>
<dbReference type="PROSITE" id="PS01306">
    <property type="entry name" value="UPF0054"/>
    <property type="match status" value="1"/>
</dbReference>
<sequence length="150" mass="17550">MIRILGEGKGSKLLENLKEKLEEIVKKEIGDVHVNVILVSEDEIKELNQQFRGQDRPTDVLTFPLMEEDVYGEIYVCPLIVEENAREFNNTFEKELLEVVIHGILHLAGYDHEFEDKNSKEMFEKQKKYVEEVWGEWRSNPSEDSDPGKR</sequence>
<organism>
    <name type="scientific">Thermotoga maritima (strain ATCC 43589 / DSM 3109 / JCM 10099 / NBRC 100826 / MSB8)</name>
    <dbReference type="NCBI Taxonomy" id="243274"/>
    <lineage>
        <taxon>Bacteria</taxon>
        <taxon>Thermotogati</taxon>
        <taxon>Thermotogota</taxon>
        <taxon>Thermotogae</taxon>
        <taxon>Thermotogales</taxon>
        <taxon>Thermotogaceae</taxon>
        <taxon>Thermotoga</taxon>
    </lineage>
</organism>
<accession>Q9X1J7</accession>